<gene>
    <name evidence="1" type="primary">gltX2</name>
    <name type="ordered locus">RBE_0457</name>
</gene>
<feature type="chain" id="PRO_0000277972" description="Glutamate--tRNA ligase 2">
    <location>
        <begin position="1"/>
        <end position="464"/>
    </location>
</feature>
<feature type="short sequence motif" description="'HIGH' region" evidence="1">
    <location>
        <begin position="11"/>
        <end position="21"/>
    </location>
</feature>
<feature type="short sequence motif" description="'KMSKS' region" evidence="1">
    <location>
        <begin position="240"/>
        <end position="244"/>
    </location>
</feature>
<feature type="binding site" evidence="1">
    <location>
        <position position="243"/>
    </location>
    <ligand>
        <name>ATP</name>
        <dbReference type="ChEBI" id="CHEBI:30616"/>
    </ligand>
</feature>
<dbReference type="EC" id="6.1.1.17" evidence="1"/>
<dbReference type="EMBL" id="CP000087">
    <property type="protein sequence ID" value="ABE04538.1"/>
    <property type="molecule type" value="Genomic_DNA"/>
</dbReference>
<dbReference type="RefSeq" id="WP_011477131.1">
    <property type="nucleotide sequence ID" value="NC_007940.1"/>
</dbReference>
<dbReference type="SMR" id="Q1RJC6"/>
<dbReference type="KEGG" id="rbe:RBE_0457"/>
<dbReference type="eggNOG" id="COG0008">
    <property type="taxonomic scope" value="Bacteria"/>
</dbReference>
<dbReference type="HOGENOM" id="CLU_015768_6_3_5"/>
<dbReference type="OrthoDB" id="9807503at2"/>
<dbReference type="Proteomes" id="UP000001951">
    <property type="component" value="Chromosome"/>
</dbReference>
<dbReference type="GO" id="GO:0005829">
    <property type="term" value="C:cytosol"/>
    <property type="evidence" value="ECO:0007669"/>
    <property type="project" value="TreeGrafter"/>
</dbReference>
<dbReference type="GO" id="GO:0005524">
    <property type="term" value="F:ATP binding"/>
    <property type="evidence" value="ECO:0007669"/>
    <property type="project" value="UniProtKB-UniRule"/>
</dbReference>
<dbReference type="GO" id="GO:0004818">
    <property type="term" value="F:glutamate-tRNA ligase activity"/>
    <property type="evidence" value="ECO:0007669"/>
    <property type="project" value="UniProtKB-UniRule"/>
</dbReference>
<dbReference type="GO" id="GO:0000049">
    <property type="term" value="F:tRNA binding"/>
    <property type="evidence" value="ECO:0007669"/>
    <property type="project" value="InterPro"/>
</dbReference>
<dbReference type="GO" id="GO:0008270">
    <property type="term" value="F:zinc ion binding"/>
    <property type="evidence" value="ECO:0007669"/>
    <property type="project" value="InterPro"/>
</dbReference>
<dbReference type="GO" id="GO:0006424">
    <property type="term" value="P:glutamyl-tRNA aminoacylation"/>
    <property type="evidence" value="ECO:0007669"/>
    <property type="project" value="UniProtKB-UniRule"/>
</dbReference>
<dbReference type="CDD" id="cd00808">
    <property type="entry name" value="GluRS_core"/>
    <property type="match status" value="1"/>
</dbReference>
<dbReference type="FunFam" id="3.40.50.620:FF:000007">
    <property type="entry name" value="Glutamate--tRNA ligase"/>
    <property type="match status" value="1"/>
</dbReference>
<dbReference type="Gene3D" id="1.10.10.350">
    <property type="match status" value="1"/>
</dbReference>
<dbReference type="Gene3D" id="3.40.50.620">
    <property type="entry name" value="HUPs"/>
    <property type="match status" value="1"/>
</dbReference>
<dbReference type="HAMAP" id="MF_00022">
    <property type="entry name" value="Glu_tRNA_synth_type1"/>
    <property type="match status" value="1"/>
</dbReference>
<dbReference type="InterPro" id="IPR045462">
    <property type="entry name" value="aa-tRNA-synth_I_cd-bd"/>
</dbReference>
<dbReference type="InterPro" id="IPR020751">
    <property type="entry name" value="aa-tRNA-synth_I_codon-bd_sub2"/>
</dbReference>
<dbReference type="InterPro" id="IPR008925">
    <property type="entry name" value="aa_tRNA-synth_I_cd-bd_sf"/>
</dbReference>
<dbReference type="InterPro" id="IPR004527">
    <property type="entry name" value="Glu-tRNA-ligase_bac/mito"/>
</dbReference>
<dbReference type="InterPro" id="IPR000924">
    <property type="entry name" value="Glu/Gln-tRNA-synth"/>
</dbReference>
<dbReference type="InterPro" id="IPR020058">
    <property type="entry name" value="Glu/Gln-tRNA-synth_Ib_cat-dom"/>
</dbReference>
<dbReference type="InterPro" id="IPR049940">
    <property type="entry name" value="GluQ/Sye"/>
</dbReference>
<dbReference type="InterPro" id="IPR033910">
    <property type="entry name" value="GluRS_core"/>
</dbReference>
<dbReference type="InterPro" id="IPR014729">
    <property type="entry name" value="Rossmann-like_a/b/a_fold"/>
</dbReference>
<dbReference type="NCBIfam" id="TIGR00464">
    <property type="entry name" value="gltX_bact"/>
    <property type="match status" value="1"/>
</dbReference>
<dbReference type="PANTHER" id="PTHR43311">
    <property type="entry name" value="GLUTAMATE--TRNA LIGASE"/>
    <property type="match status" value="1"/>
</dbReference>
<dbReference type="PANTHER" id="PTHR43311:SF2">
    <property type="entry name" value="GLUTAMATE--TRNA LIGASE, MITOCHONDRIAL-RELATED"/>
    <property type="match status" value="1"/>
</dbReference>
<dbReference type="Pfam" id="PF19269">
    <property type="entry name" value="Anticodon_2"/>
    <property type="match status" value="1"/>
</dbReference>
<dbReference type="Pfam" id="PF00749">
    <property type="entry name" value="tRNA-synt_1c"/>
    <property type="match status" value="1"/>
</dbReference>
<dbReference type="PRINTS" id="PR00987">
    <property type="entry name" value="TRNASYNTHGLU"/>
</dbReference>
<dbReference type="SUPFAM" id="SSF48163">
    <property type="entry name" value="An anticodon-binding domain of class I aminoacyl-tRNA synthetases"/>
    <property type="match status" value="1"/>
</dbReference>
<dbReference type="SUPFAM" id="SSF52374">
    <property type="entry name" value="Nucleotidylyl transferase"/>
    <property type="match status" value="1"/>
</dbReference>
<sequence>MTNNVITRFAPSPTGFLHIGSARTALFNYLFAKHNNGKFLLRIEDTDKERSTEAAVEAIFSGLKWLGLNWDDEVVFQSKRNDLYKEAALKLLAEGKAYYCFTPQEEIEKQRQEALENKQHFIFNSKWRDKTSDTYPKDIKPVIRLKTPSSGSITIHDTLQGDVVIENCHIDDMVLLRSDGTATYMLAVVVDDHDMGITHIIRGDDHLTNAARQIAIYNAFGYHVPIMTHIPLIHGADGAKLSKRHGALGVEAYKDMGYLPESLCNYLLRLGWSHGDDEIIQMDQAIEWFNLDSLGKSPARLDFTKMNSLNSHYLRMLDEDSLITKILEILNRNYKVSEQEVNYIRRGLQGLLVRSETLLDLAKLAKIYLVNIPVAYESEAKEIIANCDKNLINNVVQGLEKLERFDKESVQDEFKKIAAANSLKLNEVMKPVRALITGMVGSPSVFEIAEILGKENILKRLEIK</sequence>
<protein>
    <recommendedName>
        <fullName evidence="1">Glutamate--tRNA ligase 2</fullName>
        <ecNumber evidence="1">6.1.1.17</ecNumber>
    </recommendedName>
    <alternativeName>
        <fullName evidence="1">Glutamyl-tRNA synthetase 2</fullName>
        <shortName evidence="1">GluRS 2</shortName>
    </alternativeName>
</protein>
<accession>Q1RJC6</accession>
<proteinExistence type="inferred from homology"/>
<organism>
    <name type="scientific">Rickettsia bellii (strain RML369-C)</name>
    <dbReference type="NCBI Taxonomy" id="336407"/>
    <lineage>
        <taxon>Bacteria</taxon>
        <taxon>Pseudomonadati</taxon>
        <taxon>Pseudomonadota</taxon>
        <taxon>Alphaproteobacteria</taxon>
        <taxon>Rickettsiales</taxon>
        <taxon>Rickettsiaceae</taxon>
        <taxon>Rickettsieae</taxon>
        <taxon>Rickettsia</taxon>
        <taxon>belli group</taxon>
    </lineage>
</organism>
<keyword id="KW-0030">Aminoacyl-tRNA synthetase</keyword>
<keyword id="KW-0067">ATP-binding</keyword>
<keyword id="KW-0963">Cytoplasm</keyword>
<keyword id="KW-0436">Ligase</keyword>
<keyword id="KW-0547">Nucleotide-binding</keyword>
<keyword id="KW-0648">Protein biosynthesis</keyword>
<name>SYE2_RICBR</name>
<comment type="function">
    <text evidence="1">Catalyzes the attachment of glutamate to tRNA(Glu) in a two-step reaction: glutamate is first activated by ATP to form Glu-AMP and then transferred to the acceptor end of tRNA(Glu).</text>
</comment>
<comment type="catalytic activity">
    <reaction evidence="1">
        <text>tRNA(Glu) + L-glutamate + ATP = L-glutamyl-tRNA(Glu) + AMP + diphosphate</text>
        <dbReference type="Rhea" id="RHEA:23540"/>
        <dbReference type="Rhea" id="RHEA-COMP:9663"/>
        <dbReference type="Rhea" id="RHEA-COMP:9680"/>
        <dbReference type="ChEBI" id="CHEBI:29985"/>
        <dbReference type="ChEBI" id="CHEBI:30616"/>
        <dbReference type="ChEBI" id="CHEBI:33019"/>
        <dbReference type="ChEBI" id="CHEBI:78442"/>
        <dbReference type="ChEBI" id="CHEBI:78520"/>
        <dbReference type="ChEBI" id="CHEBI:456215"/>
        <dbReference type="EC" id="6.1.1.17"/>
    </reaction>
</comment>
<comment type="subunit">
    <text evidence="1">Monomer.</text>
</comment>
<comment type="subcellular location">
    <subcellularLocation>
        <location evidence="1">Cytoplasm</location>
    </subcellularLocation>
</comment>
<comment type="similarity">
    <text evidence="1">Belongs to the class-I aminoacyl-tRNA synthetase family. Glutamate--tRNA ligase type 1 subfamily.</text>
</comment>
<evidence type="ECO:0000255" key="1">
    <source>
        <dbReference type="HAMAP-Rule" id="MF_00022"/>
    </source>
</evidence>
<reference key="1">
    <citation type="journal article" date="2006" name="PLoS Genet.">
        <title>Genome sequence of Rickettsia bellii illuminates the role of amoebae in gene exchanges between intracellular pathogens.</title>
        <authorList>
            <person name="Ogata H."/>
            <person name="La Scola B."/>
            <person name="Audic S."/>
            <person name="Renesto P."/>
            <person name="Blanc G."/>
            <person name="Robert C."/>
            <person name="Fournier P.-E."/>
            <person name="Claverie J.-M."/>
            <person name="Raoult D."/>
        </authorList>
    </citation>
    <scope>NUCLEOTIDE SEQUENCE [LARGE SCALE GENOMIC DNA]</scope>
    <source>
        <strain>RML369-C</strain>
    </source>
</reference>